<proteinExistence type="evidence at transcript level"/>
<protein>
    <recommendedName>
        <fullName>DDB1- and CUL4-associated factor 10</fullName>
    </recommendedName>
    <alternativeName>
        <fullName>WD repeat-containing protein 32</fullName>
    </alternativeName>
</protein>
<reference key="1">
    <citation type="submission" date="2006-10" db="EMBL/GenBank/DDBJ databases">
        <authorList>
            <consortium name="Sanger Xenopus tropicalis EST/cDNA project"/>
        </authorList>
    </citation>
    <scope>NUCLEOTIDE SEQUENCE [LARGE SCALE MRNA]</scope>
    <source>
        <tissue>Egg</tissue>
    </source>
</reference>
<reference key="2">
    <citation type="submission" date="2005-02" db="EMBL/GenBank/DDBJ databases">
        <authorList>
            <consortium name="NIH - Xenopus Gene Collection (XGC) project"/>
        </authorList>
    </citation>
    <scope>NUCLEOTIDE SEQUENCE [LARGE SCALE MRNA]</scope>
</reference>
<keyword id="KW-1185">Reference proteome</keyword>
<keyword id="KW-0677">Repeat</keyword>
<keyword id="KW-0833">Ubl conjugation pathway</keyword>
<keyword id="KW-0853">WD repeat</keyword>
<accession>Q5FW06</accession>
<name>DCA10_XENTR</name>
<organism>
    <name type="scientific">Xenopus tropicalis</name>
    <name type="common">Western clawed frog</name>
    <name type="synonym">Silurana tropicalis</name>
    <dbReference type="NCBI Taxonomy" id="8364"/>
    <lineage>
        <taxon>Eukaryota</taxon>
        <taxon>Metazoa</taxon>
        <taxon>Chordata</taxon>
        <taxon>Craniata</taxon>
        <taxon>Vertebrata</taxon>
        <taxon>Euteleostomi</taxon>
        <taxon>Amphibia</taxon>
        <taxon>Batrachia</taxon>
        <taxon>Anura</taxon>
        <taxon>Pipoidea</taxon>
        <taxon>Pipidae</taxon>
        <taxon>Xenopodinae</taxon>
        <taxon>Xenopus</taxon>
        <taxon>Silurana</taxon>
    </lineage>
</organism>
<gene>
    <name type="primary">dcaf10</name>
    <name type="synonym">wdr32</name>
    <name type="ORF">TEgg067n05.1</name>
</gene>
<comment type="function">
    <text evidence="1">May function as a substrate receptor for CUL4-DDB1 E3 ubiquitin-protein ligase complex.</text>
</comment>
<comment type="pathway">
    <text>Protein modification; protein ubiquitination.</text>
</comment>
<comment type="similarity">
    <text evidence="3">Belongs to the WD repeat DCAF10 family.</text>
</comment>
<comment type="sequence caution" evidence="3">
    <conflict type="erroneous initiation">
        <sequence resource="EMBL-CDS" id="AAH89677"/>
    </conflict>
</comment>
<dbReference type="EMBL" id="CR762027">
    <property type="protein sequence ID" value="CAJ81491.1"/>
    <property type="molecule type" value="mRNA"/>
</dbReference>
<dbReference type="EMBL" id="BC089677">
    <property type="protein sequence ID" value="AAH89677.1"/>
    <property type="status" value="ALT_INIT"/>
    <property type="molecule type" value="mRNA"/>
</dbReference>
<dbReference type="RefSeq" id="NP_001015742.2">
    <property type="nucleotide sequence ID" value="NM_001015742.2"/>
</dbReference>
<dbReference type="SMR" id="Q5FW06"/>
<dbReference type="FunCoup" id="Q5FW06">
    <property type="interactions" value="1204"/>
</dbReference>
<dbReference type="STRING" id="8364.ENSXETP00000001122"/>
<dbReference type="PaxDb" id="8364-ENSXETP00000004775"/>
<dbReference type="DNASU" id="548459"/>
<dbReference type="GeneID" id="548459"/>
<dbReference type="KEGG" id="xtr:548459"/>
<dbReference type="AGR" id="Xenbase:XB-GENE-967155"/>
<dbReference type="CTD" id="79269"/>
<dbReference type="Xenbase" id="XB-GENE-967155">
    <property type="gene designation" value="dcaf10"/>
</dbReference>
<dbReference type="eggNOG" id="KOG0264">
    <property type="taxonomic scope" value="Eukaryota"/>
</dbReference>
<dbReference type="eggNOG" id="KOG4155">
    <property type="taxonomic scope" value="Eukaryota"/>
</dbReference>
<dbReference type="HOGENOM" id="CLU_028919_2_0_1"/>
<dbReference type="InParanoid" id="Q5FW06"/>
<dbReference type="OMA" id="STAHEDC"/>
<dbReference type="OrthoDB" id="20669at2759"/>
<dbReference type="PhylomeDB" id="Q5FW06"/>
<dbReference type="TreeFam" id="TF323434"/>
<dbReference type="Reactome" id="R-XTR-8951664">
    <property type="pathway name" value="Neddylation"/>
</dbReference>
<dbReference type="UniPathway" id="UPA00143"/>
<dbReference type="Proteomes" id="UP000008143">
    <property type="component" value="Chromosome 1"/>
</dbReference>
<dbReference type="Bgee" id="ENSXETG00000002243">
    <property type="expression patterns" value="Expressed in skeletal muscle tissue and 15 other cell types or tissues"/>
</dbReference>
<dbReference type="GO" id="GO:0080008">
    <property type="term" value="C:Cul4-RING E3 ubiquitin ligase complex"/>
    <property type="evidence" value="ECO:0000250"/>
    <property type="project" value="UniProtKB"/>
</dbReference>
<dbReference type="GO" id="GO:0016567">
    <property type="term" value="P:protein ubiquitination"/>
    <property type="evidence" value="ECO:0007669"/>
    <property type="project" value="UniProtKB-UniPathway"/>
</dbReference>
<dbReference type="FunFam" id="2.130.10.10:FF:000116">
    <property type="entry name" value="DDB1- and CUL4-associated factor 10"/>
    <property type="match status" value="1"/>
</dbReference>
<dbReference type="FunFam" id="2.130.10.10:FF:000321">
    <property type="entry name" value="DDB1- and CUL4-associated factor 10"/>
    <property type="match status" value="1"/>
</dbReference>
<dbReference type="Gene3D" id="2.130.10.10">
    <property type="entry name" value="YVTN repeat-like/Quinoprotein amine dehydrogenase"/>
    <property type="match status" value="2"/>
</dbReference>
<dbReference type="InterPro" id="IPR039085">
    <property type="entry name" value="DCA10"/>
</dbReference>
<dbReference type="InterPro" id="IPR015943">
    <property type="entry name" value="WD40/YVTN_repeat-like_dom_sf"/>
</dbReference>
<dbReference type="InterPro" id="IPR036322">
    <property type="entry name" value="WD40_repeat_dom_sf"/>
</dbReference>
<dbReference type="InterPro" id="IPR001680">
    <property type="entry name" value="WD40_rpt"/>
</dbReference>
<dbReference type="PANTHER" id="PTHR14588">
    <property type="entry name" value="DDB1- AND CUL4-ASSOCIATED FACTOR 10"/>
    <property type="match status" value="1"/>
</dbReference>
<dbReference type="PANTHER" id="PTHR14588:SF2">
    <property type="entry name" value="DDB1- AND CUL4-ASSOCIATED FACTOR 10"/>
    <property type="match status" value="1"/>
</dbReference>
<dbReference type="Pfam" id="PF00400">
    <property type="entry name" value="WD40"/>
    <property type="match status" value="3"/>
</dbReference>
<dbReference type="SMART" id="SM00320">
    <property type="entry name" value="WD40"/>
    <property type="match status" value="5"/>
</dbReference>
<dbReference type="SUPFAM" id="SSF50978">
    <property type="entry name" value="WD40 repeat-like"/>
    <property type="match status" value="1"/>
</dbReference>
<dbReference type="PROSITE" id="PS00678">
    <property type="entry name" value="WD_REPEATS_1"/>
    <property type="match status" value="1"/>
</dbReference>
<dbReference type="PROSITE" id="PS50082">
    <property type="entry name" value="WD_REPEATS_2"/>
    <property type="match status" value="2"/>
</dbReference>
<dbReference type="PROSITE" id="PS50294">
    <property type="entry name" value="WD_REPEATS_REGION"/>
    <property type="match status" value="1"/>
</dbReference>
<evidence type="ECO:0000250" key="1"/>
<evidence type="ECO:0000256" key="2">
    <source>
        <dbReference type="SAM" id="MobiDB-lite"/>
    </source>
</evidence>
<evidence type="ECO:0000305" key="3"/>
<feature type="chain" id="PRO_0000306837" description="DDB1- and CUL4-associated factor 10">
    <location>
        <begin position="1"/>
        <end position="457"/>
    </location>
</feature>
<feature type="repeat" description="WD 1">
    <location>
        <begin position="65"/>
        <end position="104"/>
    </location>
</feature>
<feature type="repeat" description="WD 2">
    <location>
        <begin position="108"/>
        <end position="146"/>
    </location>
</feature>
<feature type="repeat" description="WD 3">
    <location>
        <begin position="150"/>
        <end position="189"/>
    </location>
</feature>
<feature type="repeat" description="WD 4">
    <location>
        <begin position="195"/>
        <end position="234"/>
    </location>
</feature>
<feature type="repeat" description="WD 5">
    <location>
        <begin position="306"/>
        <end position="346"/>
    </location>
</feature>
<feature type="repeat" description="WD 6">
    <location>
        <begin position="368"/>
        <end position="406"/>
    </location>
</feature>
<feature type="repeat" description="WD 7">
    <location>
        <begin position="424"/>
        <end position="457"/>
    </location>
</feature>
<feature type="region of interest" description="Disordered" evidence="2">
    <location>
        <begin position="246"/>
        <end position="304"/>
    </location>
</feature>
<feature type="compositionally biased region" description="Low complexity" evidence="2">
    <location>
        <begin position="246"/>
        <end position="265"/>
    </location>
</feature>
<feature type="compositionally biased region" description="Polar residues" evidence="2">
    <location>
        <begin position="281"/>
        <end position="292"/>
    </location>
</feature>
<sequence length="457" mass="50862">MEGGTNDGAAVPGNGAGTAGSIFWWLKNRCLGRGLCVDPARDNFRTMTSLYSSIHPADSVNLSTRTHGAVFNLEYSPDGSVLTVACEQTEVLLFDPVSSKHIKTLSEAHEDCVNNIRFLDNRMFATCSDDTTIALWDLRKLNSKVCTLHGHTSWVKNIEYDTNTRLLVTSGFDGNVIIWDTNRCTEDGCPHKKFFHTRFLMRMRLTPDCSKMLISTSSGYLLILHELDLTKSLEVGSYPILRARRTASTSDMTSTSSDTRPSSSPCHNSDLGPLFEKHMSRSSQREGASPRNSLEVLTPEVPGERDRGNCITSLQLHPKGWATLLRCSSNTDDQEWTCVYEFQEGAPVRQVSPRCSLRLTHYIEEANVGRGYIKELCFSPDGRMIASPYAYGIRLLGFDSQCKELVDCLPKEAGTLQVIRSLYSHKDVVLTTKFSPTHCQIASGCLSGRVTLYQPKF</sequence>